<comment type="function">
    <text evidence="1">Catalyzes the hydrolysis of UDP-3-O-myristoyl-N-acetylglucosamine to form UDP-3-O-myristoylglucosamine and acetate, the committed step in lipid A biosynthesis.</text>
</comment>
<comment type="catalytic activity">
    <reaction evidence="1">
        <text>a UDP-3-O-[(3R)-3-hydroxyacyl]-N-acetyl-alpha-D-glucosamine + H2O = a UDP-3-O-[(3R)-3-hydroxyacyl]-alpha-D-glucosamine + acetate</text>
        <dbReference type="Rhea" id="RHEA:67816"/>
        <dbReference type="ChEBI" id="CHEBI:15377"/>
        <dbReference type="ChEBI" id="CHEBI:30089"/>
        <dbReference type="ChEBI" id="CHEBI:137740"/>
        <dbReference type="ChEBI" id="CHEBI:173225"/>
        <dbReference type="EC" id="3.5.1.108"/>
    </reaction>
</comment>
<comment type="cofactor">
    <cofactor evidence="1">
        <name>Zn(2+)</name>
        <dbReference type="ChEBI" id="CHEBI:29105"/>
    </cofactor>
</comment>
<comment type="pathway">
    <text evidence="1">Glycolipid biosynthesis; lipid IV(A) biosynthesis; lipid IV(A) from (3R)-3-hydroxytetradecanoyl-[acyl-carrier-protein] and UDP-N-acetyl-alpha-D-glucosamine: step 2/6.</text>
</comment>
<comment type="similarity">
    <text evidence="1">Belongs to the LpxC family.</text>
</comment>
<organism>
    <name type="scientific">Bdellovibrio bacteriovorus (strain ATCC 15356 / DSM 50701 / NCIMB 9529 / HD100)</name>
    <dbReference type="NCBI Taxonomy" id="264462"/>
    <lineage>
        <taxon>Bacteria</taxon>
        <taxon>Pseudomonadati</taxon>
        <taxon>Bdellovibrionota</taxon>
        <taxon>Bdellovibrionia</taxon>
        <taxon>Bdellovibrionales</taxon>
        <taxon>Pseudobdellovibrionaceae</taxon>
        <taxon>Bdellovibrio</taxon>
    </lineage>
</organism>
<sequence length="302" mass="33281">MFLQKTIRKKTVVQGIGIHSGDPCTLTFRPAPADTGVYFIRTDLPGSPSLKVTARNVQATSHQTTIGGPAFSVATIEHCVSALSALRIDNLFIELDGPEIPIGDGSARVFLEALLAVGIVEQDQPRKYCYITEPIYFSEGEKHAYVVPYHGLRLTVTIDFPNPTIGKQTIDLDINEQSFGRDVANARTFGFMKDVEALKSRGLAKGGSLDNCIVLDGENVVNPEGLRWADEFVRHKCLDALGDLVTLEMPLMGHVVLYKAGHDVMNKLVRKIWDSPTSYRHVELGADISDEVRRYTGWTVPV</sequence>
<name>LPXC_BDEBA</name>
<gene>
    <name evidence="1" type="primary">lpxC</name>
    <name type="ordered locus">Bd2484</name>
</gene>
<feature type="chain" id="PRO_1000190886" description="UDP-3-O-acyl-N-acetylglucosamine deacetylase">
    <location>
        <begin position="1"/>
        <end position="302"/>
    </location>
</feature>
<feature type="active site" description="Proton donor" evidence="1">
    <location>
        <position position="262"/>
    </location>
</feature>
<feature type="binding site" evidence="1">
    <location>
        <position position="78"/>
    </location>
    <ligand>
        <name>Zn(2+)</name>
        <dbReference type="ChEBI" id="CHEBI:29105"/>
    </ligand>
</feature>
<feature type="binding site" evidence="1">
    <location>
        <position position="235"/>
    </location>
    <ligand>
        <name>Zn(2+)</name>
        <dbReference type="ChEBI" id="CHEBI:29105"/>
    </ligand>
</feature>
<feature type="binding site" evidence="1">
    <location>
        <position position="239"/>
    </location>
    <ligand>
        <name>Zn(2+)</name>
        <dbReference type="ChEBI" id="CHEBI:29105"/>
    </ligand>
</feature>
<accession>Q6MKC0</accession>
<evidence type="ECO:0000255" key="1">
    <source>
        <dbReference type="HAMAP-Rule" id="MF_00388"/>
    </source>
</evidence>
<keyword id="KW-0378">Hydrolase</keyword>
<keyword id="KW-0441">Lipid A biosynthesis</keyword>
<keyword id="KW-0444">Lipid biosynthesis</keyword>
<keyword id="KW-0443">Lipid metabolism</keyword>
<keyword id="KW-0479">Metal-binding</keyword>
<keyword id="KW-1185">Reference proteome</keyword>
<keyword id="KW-0862">Zinc</keyword>
<reference key="1">
    <citation type="journal article" date="2004" name="Science">
        <title>A predator unmasked: life cycle of Bdellovibrio bacteriovorus from a genomic perspective.</title>
        <authorList>
            <person name="Rendulic S."/>
            <person name="Jagtap P."/>
            <person name="Rosinus A."/>
            <person name="Eppinger M."/>
            <person name="Baar C."/>
            <person name="Lanz C."/>
            <person name="Keller H."/>
            <person name="Lambert C."/>
            <person name="Evans K.J."/>
            <person name="Goesmann A."/>
            <person name="Meyer F."/>
            <person name="Sockett R.E."/>
            <person name="Schuster S.C."/>
        </authorList>
    </citation>
    <scope>NUCLEOTIDE SEQUENCE [LARGE SCALE GENOMIC DNA]</scope>
    <source>
        <strain>ATCC 15356 / DSM 50701 / NCIMB 9529 / HD100</strain>
    </source>
</reference>
<protein>
    <recommendedName>
        <fullName evidence="1">UDP-3-O-acyl-N-acetylglucosamine deacetylase</fullName>
        <shortName evidence="1">UDP-3-O-acyl-GlcNAc deacetylase</shortName>
        <ecNumber evidence="1">3.5.1.108</ecNumber>
    </recommendedName>
    <alternativeName>
        <fullName evidence="1">UDP-3-O-[R-3-hydroxymyristoyl]-N-acetylglucosamine deacetylase</fullName>
    </alternativeName>
</protein>
<dbReference type="EC" id="3.5.1.108" evidence="1"/>
<dbReference type="EMBL" id="BX842652">
    <property type="protein sequence ID" value="CAE80287.1"/>
    <property type="molecule type" value="Genomic_DNA"/>
</dbReference>
<dbReference type="RefSeq" id="WP_011164890.1">
    <property type="nucleotide sequence ID" value="NC_005363.1"/>
</dbReference>
<dbReference type="SMR" id="Q6MKC0"/>
<dbReference type="STRING" id="264462.Bd2484"/>
<dbReference type="GeneID" id="93013391"/>
<dbReference type="KEGG" id="bba:Bd2484"/>
<dbReference type="eggNOG" id="COG0774">
    <property type="taxonomic scope" value="Bacteria"/>
</dbReference>
<dbReference type="HOGENOM" id="CLU_046528_1_0_7"/>
<dbReference type="UniPathway" id="UPA00359">
    <property type="reaction ID" value="UER00478"/>
</dbReference>
<dbReference type="Proteomes" id="UP000008080">
    <property type="component" value="Chromosome"/>
</dbReference>
<dbReference type="GO" id="GO:0016020">
    <property type="term" value="C:membrane"/>
    <property type="evidence" value="ECO:0007669"/>
    <property type="project" value="GOC"/>
</dbReference>
<dbReference type="GO" id="GO:0046872">
    <property type="term" value="F:metal ion binding"/>
    <property type="evidence" value="ECO:0007669"/>
    <property type="project" value="UniProtKB-KW"/>
</dbReference>
<dbReference type="GO" id="GO:0103117">
    <property type="term" value="F:UDP-3-O-acyl-N-acetylglucosamine deacetylase activity"/>
    <property type="evidence" value="ECO:0007669"/>
    <property type="project" value="UniProtKB-UniRule"/>
</dbReference>
<dbReference type="GO" id="GO:0009245">
    <property type="term" value="P:lipid A biosynthetic process"/>
    <property type="evidence" value="ECO:0007669"/>
    <property type="project" value="UniProtKB-UniRule"/>
</dbReference>
<dbReference type="Gene3D" id="3.30.230.20">
    <property type="entry name" value="lpxc deacetylase, domain 1"/>
    <property type="match status" value="1"/>
</dbReference>
<dbReference type="Gene3D" id="3.30.1700.10">
    <property type="entry name" value="lpxc deacetylase, domain 2"/>
    <property type="match status" value="1"/>
</dbReference>
<dbReference type="HAMAP" id="MF_00388">
    <property type="entry name" value="LpxC"/>
    <property type="match status" value="1"/>
</dbReference>
<dbReference type="InterPro" id="IPR020568">
    <property type="entry name" value="Ribosomal_Su5_D2-typ_SF"/>
</dbReference>
<dbReference type="InterPro" id="IPR004463">
    <property type="entry name" value="UDP-acyl_GlcNac_deAcase"/>
</dbReference>
<dbReference type="InterPro" id="IPR011334">
    <property type="entry name" value="UDP-acyl_GlcNac_deAcase_C"/>
</dbReference>
<dbReference type="InterPro" id="IPR015870">
    <property type="entry name" value="UDP-acyl_N-AcGlcN_deAcase_N"/>
</dbReference>
<dbReference type="NCBIfam" id="TIGR00325">
    <property type="entry name" value="lpxC"/>
    <property type="match status" value="1"/>
</dbReference>
<dbReference type="PANTHER" id="PTHR33694">
    <property type="entry name" value="UDP-3-O-ACYL-N-ACETYLGLUCOSAMINE DEACETYLASE 1, MITOCHONDRIAL-RELATED"/>
    <property type="match status" value="1"/>
</dbReference>
<dbReference type="PANTHER" id="PTHR33694:SF1">
    <property type="entry name" value="UDP-3-O-ACYL-N-ACETYLGLUCOSAMINE DEACETYLASE 1, MITOCHONDRIAL-RELATED"/>
    <property type="match status" value="1"/>
</dbReference>
<dbReference type="Pfam" id="PF03331">
    <property type="entry name" value="LpxC"/>
    <property type="match status" value="1"/>
</dbReference>
<dbReference type="SUPFAM" id="SSF54211">
    <property type="entry name" value="Ribosomal protein S5 domain 2-like"/>
    <property type="match status" value="2"/>
</dbReference>
<proteinExistence type="inferred from homology"/>